<organism>
    <name type="scientific">Bordetella pertussis (strain Tohama I / ATCC BAA-589 / NCTC 13251)</name>
    <dbReference type="NCBI Taxonomy" id="257313"/>
    <lineage>
        <taxon>Bacteria</taxon>
        <taxon>Pseudomonadati</taxon>
        <taxon>Pseudomonadota</taxon>
        <taxon>Betaproteobacteria</taxon>
        <taxon>Burkholderiales</taxon>
        <taxon>Alcaligenaceae</taxon>
        <taxon>Bordetella</taxon>
    </lineage>
</organism>
<accession>Q7VW21</accession>
<evidence type="ECO:0000255" key="1">
    <source>
        <dbReference type="HAMAP-Rule" id="MF_00652"/>
    </source>
</evidence>
<sequence length="257" mass="28650">MLFLLSPAKKLDYDSPVHVETHTQPLFVDQAAALIKVLKTKSADEIAELMSLSPALAELNAGRYGAWKRSFTQANSRQAVLAFNGDVYEGLQADTLSARQLDWAQDHVVILSGLYGALRPLDLMQPYRLEMGTRLHTPKGKNLYEYWGSGIAEYLNERQAGAKAPVIVNLASEEYFKVVDLKTLKARVVQCVFQDWKNGAWKVISFHAKRARGLMARYAIAHKVARPEGLQGFDSEGYAYDAAASSADKLVFRRKQA</sequence>
<keyword id="KW-1185">Reference proteome</keyword>
<name>Y2452_BORPE</name>
<feature type="chain" id="PRO_0000203977" description="UPF0246 protein BP2452">
    <location>
        <begin position="1"/>
        <end position="257"/>
    </location>
</feature>
<reference key="1">
    <citation type="journal article" date="2003" name="Nat. Genet.">
        <title>Comparative analysis of the genome sequences of Bordetella pertussis, Bordetella parapertussis and Bordetella bronchiseptica.</title>
        <authorList>
            <person name="Parkhill J."/>
            <person name="Sebaihia M."/>
            <person name="Preston A."/>
            <person name="Murphy L.D."/>
            <person name="Thomson N.R."/>
            <person name="Harris D.E."/>
            <person name="Holden M.T.G."/>
            <person name="Churcher C.M."/>
            <person name="Bentley S.D."/>
            <person name="Mungall K.L."/>
            <person name="Cerdeno-Tarraga A.-M."/>
            <person name="Temple L."/>
            <person name="James K.D."/>
            <person name="Harris B."/>
            <person name="Quail M.A."/>
            <person name="Achtman M."/>
            <person name="Atkin R."/>
            <person name="Baker S."/>
            <person name="Basham D."/>
            <person name="Bason N."/>
            <person name="Cherevach I."/>
            <person name="Chillingworth T."/>
            <person name="Collins M."/>
            <person name="Cronin A."/>
            <person name="Davis P."/>
            <person name="Doggett J."/>
            <person name="Feltwell T."/>
            <person name="Goble A."/>
            <person name="Hamlin N."/>
            <person name="Hauser H."/>
            <person name="Holroyd S."/>
            <person name="Jagels K."/>
            <person name="Leather S."/>
            <person name="Moule S."/>
            <person name="Norberczak H."/>
            <person name="O'Neil S."/>
            <person name="Ormond D."/>
            <person name="Price C."/>
            <person name="Rabbinowitsch E."/>
            <person name="Rutter S."/>
            <person name="Sanders M."/>
            <person name="Saunders D."/>
            <person name="Seeger K."/>
            <person name="Sharp S."/>
            <person name="Simmonds M."/>
            <person name="Skelton J."/>
            <person name="Squares R."/>
            <person name="Squares S."/>
            <person name="Stevens K."/>
            <person name="Unwin L."/>
            <person name="Whitehead S."/>
            <person name="Barrell B.G."/>
            <person name="Maskell D.J."/>
        </authorList>
    </citation>
    <scope>NUCLEOTIDE SEQUENCE [LARGE SCALE GENOMIC DNA]</scope>
    <source>
        <strain>Tohama I / ATCC BAA-589 / NCTC 13251</strain>
    </source>
</reference>
<comment type="similarity">
    <text evidence="1">Belongs to the UPF0246 family.</text>
</comment>
<protein>
    <recommendedName>
        <fullName evidence="1">UPF0246 protein BP2452</fullName>
    </recommendedName>
</protein>
<proteinExistence type="inferred from homology"/>
<gene>
    <name type="ordered locus">BP2452</name>
</gene>
<dbReference type="EMBL" id="BX640418">
    <property type="protein sequence ID" value="CAE42724.1"/>
    <property type="molecule type" value="Genomic_DNA"/>
</dbReference>
<dbReference type="RefSeq" id="NP_881079.1">
    <property type="nucleotide sequence ID" value="NC_002929.2"/>
</dbReference>
<dbReference type="SMR" id="Q7VW21"/>
<dbReference type="STRING" id="257313.BP2452"/>
<dbReference type="PaxDb" id="257313-BP2452"/>
<dbReference type="KEGG" id="bpe:BP2452"/>
<dbReference type="PATRIC" id="fig|257313.5.peg.2642"/>
<dbReference type="eggNOG" id="COG3022">
    <property type="taxonomic scope" value="Bacteria"/>
</dbReference>
<dbReference type="HOGENOM" id="CLU_061989_0_0_4"/>
<dbReference type="PRO" id="PR:Q7VW21"/>
<dbReference type="Proteomes" id="UP000002676">
    <property type="component" value="Chromosome"/>
</dbReference>
<dbReference type="GO" id="GO:0005829">
    <property type="term" value="C:cytosol"/>
    <property type="evidence" value="ECO:0007669"/>
    <property type="project" value="TreeGrafter"/>
</dbReference>
<dbReference type="GO" id="GO:0033194">
    <property type="term" value="P:response to hydroperoxide"/>
    <property type="evidence" value="ECO:0007669"/>
    <property type="project" value="TreeGrafter"/>
</dbReference>
<dbReference type="HAMAP" id="MF_00652">
    <property type="entry name" value="UPF0246"/>
    <property type="match status" value="1"/>
</dbReference>
<dbReference type="InterPro" id="IPR005583">
    <property type="entry name" value="YaaA"/>
</dbReference>
<dbReference type="NCBIfam" id="NF002542">
    <property type="entry name" value="PRK02101.1-3"/>
    <property type="match status" value="1"/>
</dbReference>
<dbReference type="PANTHER" id="PTHR30283:SF4">
    <property type="entry name" value="PEROXIDE STRESS RESISTANCE PROTEIN YAAA"/>
    <property type="match status" value="1"/>
</dbReference>
<dbReference type="PANTHER" id="PTHR30283">
    <property type="entry name" value="PEROXIDE STRESS RESPONSE PROTEIN YAAA"/>
    <property type="match status" value="1"/>
</dbReference>
<dbReference type="Pfam" id="PF03883">
    <property type="entry name" value="H2O2_YaaD"/>
    <property type="match status" value="1"/>
</dbReference>